<name>THIK_ECO45</name>
<proteinExistence type="inferred from homology"/>
<sequence>MPFRSNNPLTRDELLSRFFPQFHPVTTFNSGLSGGSFLIEHQGQRFVVRQPHDPDAPQSAFLRQYRALSQLPACIAPKPHLYLRDWMVVDYLPGEVKTYLPDTNELAGLLYYLHQQPRFGWRITLLPLLELYWQQSDPARRTVGWLRMLKRLRKAREPRLLRLSPLHMDVHAGNLVHSASGLKLIDWEYAGDGDIALELAAVWVENIDQHRQLVNDYATRAKIYPAQLWRQVRRWFPWLLMLKAGWFEYRWRQTGDQQFIRLADDTWRQLLIKQ</sequence>
<reference key="1">
    <citation type="journal article" date="2009" name="PLoS Genet.">
        <title>Organised genome dynamics in the Escherichia coli species results in highly diverse adaptive paths.</title>
        <authorList>
            <person name="Touchon M."/>
            <person name="Hoede C."/>
            <person name="Tenaillon O."/>
            <person name="Barbe V."/>
            <person name="Baeriswyl S."/>
            <person name="Bidet P."/>
            <person name="Bingen E."/>
            <person name="Bonacorsi S."/>
            <person name="Bouchier C."/>
            <person name="Bouvet O."/>
            <person name="Calteau A."/>
            <person name="Chiapello H."/>
            <person name="Clermont O."/>
            <person name="Cruveiller S."/>
            <person name="Danchin A."/>
            <person name="Diard M."/>
            <person name="Dossat C."/>
            <person name="Karoui M.E."/>
            <person name="Frapy E."/>
            <person name="Garry L."/>
            <person name="Ghigo J.M."/>
            <person name="Gilles A.M."/>
            <person name="Johnson J."/>
            <person name="Le Bouguenec C."/>
            <person name="Lescat M."/>
            <person name="Mangenot S."/>
            <person name="Martinez-Jehanne V."/>
            <person name="Matic I."/>
            <person name="Nassif X."/>
            <person name="Oztas S."/>
            <person name="Petit M.A."/>
            <person name="Pichon C."/>
            <person name="Rouy Z."/>
            <person name="Ruf C.S."/>
            <person name="Schneider D."/>
            <person name="Tourret J."/>
            <person name="Vacherie B."/>
            <person name="Vallenet D."/>
            <person name="Medigue C."/>
            <person name="Rocha E.P.C."/>
            <person name="Denamur E."/>
        </authorList>
    </citation>
    <scope>NUCLEOTIDE SEQUENCE [LARGE SCALE GENOMIC DNA]</scope>
    <source>
        <strain>S88 / ExPEC</strain>
    </source>
</reference>
<keyword id="KW-0067">ATP-binding</keyword>
<keyword id="KW-0418">Kinase</keyword>
<keyword id="KW-0547">Nucleotide-binding</keyword>
<keyword id="KW-1185">Reference proteome</keyword>
<keyword id="KW-0808">Transferase</keyword>
<comment type="function">
    <text evidence="1">Catalyzes the ATP-dependent phosphorylation of thiamine to thiamine phosphate. Is involved in thiamine salvage.</text>
</comment>
<comment type="catalytic activity">
    <reaction evidence="1">
        <text>thiamine + ATP = thiamine phosphate + ADP + H(+)</text>
        <dbReference type="Rhea" id="RHEA:12012"/>
        <dbReference type="ChEBI" id="CHEBI:15378"/>
        <dbReference type="ChEBI" id="CHEBI:18385"/>
        <dbReference type="ChEBI" id="CHEBI:30616"/>
        <dbReference type="ChEBI" id="CHEBI:37575"/>
        <dbReference type="ChEBI" id="CHEBI:456216"/>
        <dbReference type="EC" id="2.7.1.89"/>
    </reaction>
    <physiologicalReaction direction="left-to-right" evidence="1">
        <dbReference type="Rhea" id="RHEA:12013"/>
    </physiologicalReaction>
</comment>
<comment type="pathway">
    <text evidence="1">Cofactor biosynthesis; thiamine diphosphate biosynthesis; thiamine phosphate from thiamine: step 1/1.</text>
</comment>
<comment type="similarity">
    <text evidence="1">Belongs to the thiamine kinase family.</text>
</comment>
<protein>
    <recommendedName>
        <fullName evidence="1">Thiamine kinase</fullName>
        <ecNumber evidence="1">2.7.1.89</ecNumber>
    </recommendedName>
</protein>
<accession>B7MJ93</accession>
<dbReference type="EC" id="2.7.1.89" evidence="1"/>
<dbReference type="EMBL" id="CU928161">
    <property type="protein sequence ID" value="CAR02446.1"/>
    <property type="molecule type" value="Genomic_DNA"/>
</dbReference>
<dbReference type="RefSeq" id="WP_001116600.1">
    <property type="nucleotide sequence ID" value="NC_011742.1"/>
</dbReference>
<dbReference type="SMR" id="B7MJ93"/>
<dbReference type="KEGG" id="ecz:ECS88_1120"/>
<dbReference type="HOGENOM" id="CLU_055115_2_1_6"/>
<dbReference type="UniPathway" id="UPA00060">
    <property type="reaction ID" value="UER00596"/>
</dbReference>
<dbReference type="Proteomes" id="UP000000747">
    <property type="component" value="Chromosome"/>
</dbReference>
<dbReference type="GO" id="GO:0005524">
    <property type="term" value="F:ATP binding"/>
    <property type="evidence" value="ECO:0007669"/>
    <property type="project" value="UniProtKB-KW"/>
</dbReference>
<dbReference type="GO" id="GO:0019165">
    <property type="term" value="F:thiamine kinase activity"/>
    <property type="evidence" value="ECO:0007669"/>
    <property type="project" value="UniProtKB-UniRule"/>
</dbReference>
<dbReference type="GO" id="GO:0009229">
    <property type="term" value="P:thiamine diphosphate biosynthetic process"/>
    <property type="evidence" value="ECO:0007669"/>
    <property type="project" value="UniProtKB-UniRule"/>
</dbReference>
<dbReference type="GO" id="GO:0006772">
    <property type="term" value="P:thiamine metabolic process"/>
    <property type="evidence" value="ECO:0007669"/>
    <property type="project" value="InterPro"/>
</dbReference>
<dbReference type="FunFam" id="3.90.1200.10:FF:000004">
    <property type="entry name" value="Thiamine kinase"/>
    <property type="match status" value="1"/>
</dbReference>
<dbReference type="Gene3D" id="3.90.1200.10">
    <property type="match status" value="1"/>
</dbReference>
<dbReference type="HAMAP" id="MF_01604">
    <property type="entry name" value="Thiamine_kinase"/>
    <property type="match status" value="1"/>
</dbReference>
<dbReference type="InterPro" id="IPR002575">
    <property type="entry name" value="Aminoglycoside_PTrfase"/>
</dbReference>
<dbReference type="InterPro" id="IPR011009">
    <property type="entry name" value="Kinase-like_dom_sf"/>
</dbReference>
<dbReference type="InterPro" id="IPR014093">
    <property type="entry name" value="Thiamine_kinase"/>
</dbReference>
<dbReference type="NCBIfam" id="NF007620">
    <property type="entry name" value="PRK10271.1"/>
    <property type="match status" value="1"/>
</dbReference>
<dbReference type="NCBIfam" id="TIGR02721">
    <property type="entry name" value="ycfN_thiK"/>
    <property type="match status" value="1"/>
</dbReference>
<dbReference type="Pfam" id="PF01636">
    <property type="entry name" value="APH"/>
    <property type="match status" value="1"/>
</dbReference>
<dbReference type="SUPFAM" id="SSF56112">
    <property type="entry name" value="Protein kinase-like (PK-like)"/>
    <property type="match status" value="1"/>
</dbReference>
<gene>
    <name evidence="1" type="primary">thiK</name>
    <name type="ordered locus">ECS88_1120</name>
</gene>
<evidence type="ECO:0000255" key="1">
    <source>
        <dbReference type="HAMAP-Rule" id="MF_01604"/>
    </source>
</evidence>
<feature type="chain" id="PRO_1000198092" description="Thiamine kinase">
    <location>
        <begin position="1"/>
        <end position="274"/>
    </location>
</feature>
<organism>
    <name type="scientific">Escherichia coli O45:K1 (strain S88 / ExPEC)</name>
    <dbReference type="NCBI Taxonomy" id="585035"/>
    <lineage>
        <taxon>Bacteria</taxon>
        <taxon>Pseudomonadati</taxon>
        <taxon>Pseudomonadota</taxon>
        <taxon>Gammaproteobacteria</taxon>
        <taxon>Enterobacterales</taxon>
        <taxon>Enterobacteriaceae</taxon>
        <taxon>Escherichia</taxon>
    </lineage>
</organism>